<name>FAR9_LOBRE</name>
<comment type="function">
    <text evidence="1">FMRFamides and FMRFamide-like peptides are neuropeptides.</text>
</comment>
<comment type="subcellular location">
    <subcellularLocation>
        <location evidence="6">Secreted</location>
    </subcellularLocation>
</comment>
<comment type="similarity">
    <text evidence="2">Belongs to the FARP (FMRF amide related peptide) family.</text>
</comment>
<reference evidence="5" key="1">
    <citation type="journal article" date="2012" name="Syst. Biol.">
        <title>Peptidomics-based phylogeny and biogeography of Mantophasmatodea (Hexapoda).</title>
        <authorList>
            <person name="Predel R."/>
            <person name="Neupert S."/>
            <person name="Huetteroth W."/>
            <person name="Kahnt J."/>
            <person name="Waidelich D."/>
            <person name="Roth S."/>
        </authorList>
    </citation>
    <scope>PROTEIN SEQUENCE</scope>
    <scope>AMIDATION AT LEU-11</scope>
    <source>
        <tissue evidence="3">Thoracic perisympathetic organs</tissue>
    </source>
</reference>
<dbReference type="GO" id="GO:0005576">
    <property type="term" value="C:extracellular region"/>
    <property type="evidence" value="ECO:0007669"/>
    <property type="project" value="UniProtKB-SubCell"/>
</dbReference>
<dbReference type="GO" id="GO:0007218">
    <property type="term" value="P:neuropeptide signaling pathway"/>
    <property type="evidence" value="ECO:0007669"/>
    <property type="project" value="UniProtKB-KW"/>
</dbReference>
<sequence length="11" mass="1130">GHGGASNYVRL</sequence>
<proteinExistence type="evidence at protein level"/>
<feature type="peptide" id="PRO_0000421543" description="Extended FMRFamide-9" evidence="3">
    <location>
        <begin position="1"/>
        <end position="11"/>
    </location>
</feature>
<feature type="modified residue" description="Leucine amide" evidence="3">
    <location>
        <position position="11"/>
    </location>
</feature>
<feature type="unsure residue" description="L or I" evidence="3">
    <location>
        <position position="11"/>
    </location>
</feature>
<accession>B3A088</accession>
<evidence type="ECO:0000250" key="1">
    <source>
        <dbReference type="UniProtKB" id="P34405"/>
    </source>
</evidence>
<evidence type="ECO:0000255" key="2"/>
<evidence type="ECO:0000269" key="3">
    <source>
    </source>
</evidence>
<evidence type="ECO:0000303" key="4">
    <source>
    </source>
</evidence>
<evidence type="ECO:0000305" key="5"/>
<evidence type="ECO:0000305" key="6">
    <source>
    </source>
</evidence>
<organism>
    <name type="scientific">Lobatophasma redelinghuysense</name>
    <name type="common">Gladiator</name>
    <name type="synonym">Heel-walker</name>
    <dbReference type="NCBI Taxonomy" id="253128"/>
    <lineage>
        <taxon>Eukaryota</taxon>
        <taxon>Metazoa</taxon>
        <taxon>Ecdysozoa</taxon>
        <taxon>Arthropoda</taxon>
        <taxon>Hexapoda</taxon>
        <taxon>Insecta</taxon>
        <taxon>Pterygota</taxon>
        <taxon>Neoptera</taxon>
        <taxon>Polyneoptera</taxon>
        <taxon>Mantophasmatodea</taxon>
        <taxon>Austrophasmatidae</taxon>
        <taxon>Lobatophasma</taxon>
    </lineage>
</organism>
<keyword id="KW-0027">Amidation</keyword>
<keyword id="KW-0903">Direct protein sequencing</keyword>
<keyword id="KW-0527">Neuropeptide</keyword>
<keyword id="KW-0964">Secreted</keyword>
<protein>
    <recommendedName>
        <fullName evidence="4">Extended FMRFamide-9</fullName>
        <shortName evidence="4">FMRFa-9</shortName>
    </recommendedName>
</protein>